<comment type="function">
    <text evidence="1">Immunity component of a contact-dependent interbacterial competition system (also called effector-immunity systems). Acts as an arginine mono-ADP-ribosylhydrolase, mediating the removal of mono-ADP-ribose attached to arginine residues on proteins. De-ADP-ribosylates FtsZ, is able to act on other proteins as well. Neutralizes the toxic activity of cognate toxin Tre1-Sp. Expression of this protein alone in E.coli partially protects the cells against competition by wild-type S.proteamaculans. Neutralizes Tre1-Sp both by occluding its active site via its N-terminal extension and by hydrolyzing the ADP-ribosyl moiety from FtsZ; the 2 activities are dissociable by mutagenesis.</text>
</comment>
<comment type="catalytic activity">
    <reaction evidence="4">
        <text>N(omega)-(ADP-D-ribosyl)-L-arginyl-[protein] + H2O = ADP-D-ribose + L-arginyl-[protein]</text>
        <dbReference type="Rhea" id="RHEA:14885"/>
        <dbReference type="Rhea" id="RHEA-COMP:10532"/>
        <dbReference type="Rhea" id="RHEA-COMP:15087"/>
        <dbReference type="ChEBI" id="CHEBI:15377"/>
        <dbReference type="ChEBI" id="CHEBI:29965"/>
        <dbReference type="ChEBI" id="CHEBI:57967"/>
        <dbReference type="ChEBI" id="CHEBI:142554"/>
        <dbReference type="EC" id="3.2.2.19"/>
    </reaction>
</comment>
<comment type="cofactor">
    <cofactor evidence="1">
        <name>Mg(2+)</name>
        <dbReference type="ChEBI" id="CHEBI:18420"/>
    </cofactor>
    <text evidence="1">Binds 1 Mg(2+) ion per subunit.</text>
</comment>
<comment type="subunit">
    <text evidence="1">Forms a stable complex with cognate effector protein Tre1-Sp.</text>
</comment>
<comment type="domain">
    <text evidence="1">The N-terminal extension forms a projection that reaches into the active site of cognate toxin Tre1-Sp where it occludes the active site.</text>
</comment>
<comment type="disruption phenotype">
    <text evidence="1">A double tre1-tri1 deletion is outcompeted by wild-type cells, but not by wild-type cells missing a type 6 secretion system (T6SS).</text>
</comment>
<comment type="similarity">
    <text evidence="3">Belongs to the ADP-ribosylglycohydrolase family.</text>
</comment>
<keyword id="KW-0002">3D-structure</keyword>
<keyword id="KW-0378">Hydrolase</keyword>
<keyword id="KW-0460">Magnesium</keyword>
<keyword id="KW-0479">Metal-binding</keyword>
<accession>A8GG79</accession>
<sequence>MIDLREDTWTLQLYAQRYKGLSPKNSRELQLRMEYDPLKPNLPTSGEEQNSKPEWLNTPPCLIPESESLDKAKGALVGLAIGDAIGTTLEFLPRDKLHVNDMVGGGPFRLQPGEWTDDTSMALCLAESYISAGRLDITLFREKLVRWYRHGENSSNGRCFDIGNTTRNALEQYLKHGASWFGNTEPETAGNAAIIRQAPTSIFRRKSLQRTFADSDSQSMATHCAPESMASCQFLGFILNYLINGSSREKAFSPHVMPLPVRVLLINAGEYKEKKRDEIRSSGYVIDTLEAAMWAVWNTDNFHDAILLAANLGDDADSVAATTGQIAGALYGYSNIPKPWLDKLVQQERISNLAEQLFYMAPEEDF</sequence>
<dbReference type="EC" id="3.2.2.19" evidence="4"/>
<dbReference type="EMBL" id="CP000826">
    <property type="protein sequence ID" value="ABV42119.1"/>
    <property type="molecule type" value="Genomic_DNA"/>
</dbReference>
<dbReference type="PDB" id="6DRE">
    <property type="method" value="X-ray"/>
    <property type="resolution" value="1.80 A"/>
    <property type="chains" value="A=1-366"/>
</dbReference>
<dbReference type="PDB" id="6DRH">
    <property type="method" value="X-ray"/>
    <property type="resolution" value="2.30 A"/>
    <property type="chains" value="A/C/E/G=1-366"/>
</dbReference>
<dbReference type="PDBsum" id="6DRE"/>
<dbReference type="PDBsum" id="6DRH"/>
<dbReference type="SMR" id="A8GG79"/>
<dbReference type="STRING" id="399741.Spro_3018"/>
<dbReference type="KEGG" id="spe:Spro_3018"/>
<dbReference type="eggNOG" id="COG1397">
    <property type="taxonomic scope" value="Bacteria"/>
</dbReference>
<dbReference type="HOGENOM" id="CLU_024566_8_4_6"/>
<dbReference type="OrthoDB" id="9798107at2"/>
<dbReference type="GO" id="GO:0003875">
    <property type="term" value="F:ADP-ribosylarginine hydrolase activity"/>
    <property type="evidence" value="ECO:0007669"/>
    <property type="project" value="UniProtKB-EC"/>
</dbReference>
<dbReference type="GO" id="GO:0046872">
    <property type="term" value="F:metal ion binding"/>
    <property type="evidence" value="ECO:0007669"/>
    <property type="project" value="UniProtKB-KW"/>
</dbReference>
<dbReference type="Gene3D" id="1.10.4080.10">
    <property type="entry name" value="ADP-ribosylation/Crystallin J1"/>
    <property type="match status" value="1"/>
</dbReference>
<dbReference type="InterPro" id="IPR050792">
    <property type="entry name" value="ADP-ribosylglycohydrolase"/>
</dbReference>
<dbReference type="InterPro" id="IPR005502">
    <property type="entry name" value="Ribosyl_crysJ1"/>
</dbReference>
<dbReference type="InterPro" id="IPR036705">
    <property type="entry name" value="Ribosyl_crysJ1_sf"/>
</dbReference>
<dbReference type="InterPro" id="IPR049650">
    <property type="entry name" value="Tri1-like"/>
</dbReference>
<dbReference type="NCBIfam" id="NF041672">
    <property type="entry name" value="ADPriboarghdlase"/>
    <property type="match status" value="1"/>
</dbReference>
<dbReference type="PANTHER" id="PTHR16222">
    <property type="entry name" value="ADP-RIBOSYLGLYCOHYDROLASE"/>
    <property type="match status" value="1"/>
</dbReference>
<dbReference type="PANTHER" id="PTHR16222:SF12">
    <property type="entry name" value="ADP-RIBOSYLGLYCOHYDROLASE-RELATED"/>
    <property type="match status" value="1"/>
</dbReference>
<dbReference type="Pfam" id="PF03747">
    <property type="entry name" value="ADP_ribosyl_GH"/>
    <property type="match status" value="1"/>
</dbReference>
<dbReference type="SUPFAM" id="SSF101478">
    <property type="entry name" value="ADP-ribosylglycohydrolase"/>
    <property type="match status" value="1"/>
</dbReference>
<proteinExistence type="evidence at protein level"/>
<name>TRI1_SERP5</name>
<feature type="chain" id="PRO_0000446517" description="ADP-ribosylarginine hydrolase Tri1">
    <location>
        <begin position="1"/>
        <end position="366"/>
    </location>
</feature>
<feature type="region of interest" description="N-terminal extension" evidence="1">
    <location>
        <begin position="1"/>
        <end position="65"/>
    </location>
</feature>
<feature type="region of interest" description="ADP-ribosyl hydrolase domain" evidence="4">
    <location>
        <begin position="74"/>
        <end position="366"/>
    </location>
</feature>
<feature type="binding site" evidence="1">
    <location>
        <position position="116"/>
    </location>
    <ligand>
        <name>Mg(2+)</name>
        <dbReference type="ChEBI" id="CHEBI:18420"/>
    </ligand>
</feature>
<feature type="binding site" evidence="1">
    <location>
        <position position="117"/>
    </location>
    <ligand>
        <name>Mg(2+)</name>
        <dbReference type="ChEBI" id="CHEBI:18420"/>
    </ligand>
</feature>
<feature type="binding site" evidence="1">
    <location>
        <position position="118"/>
    </location>
    <ligand>
        <name>Mg(2+)</name>
        <dbReference type="ChEBI" id="CHEBI:18420"/>
    </ligand>
</feature>
<feature type="binding site" evidence="1">
    <location>
        <position position="161"/>
    </location>
    <ligand>
        <name>Mg(2+)</name>
        <dbReference type="ChEBI" id="CHEBI:18420"/>
    </ligand>
</feature>
<feature type="binding site" evidence="1">
    <location>
        <position position="317"/>
    </location>
    <ligand>
        <name>Mg(2+)</name>
        <dbReference type="ChEBI" id="CHEBI:18420"/>
    </ligand>
</feature>
<feature type="mutagenesis site" description="Partially protects E.coli against cognate toxin Tre1. No longer protects E.coli; when associated with N-161." evidence="1">
    <original>R</original>
    <variation>E</variation>
    <location>
        <position position="32"/>
    </location>
</feature>
<feature type="mutagenesis site" description="Partially protects E.coli against cognate toxin Tre1, no longer de-ADP-ribosylates FtsZ. No longer protects E.coli; when associated with E-32." evidence="1">
    <original>D</original>
    <variation>N</variation>
    <location>
        <position position="161"/>
    </location>
</feature>
<feature type="helix" evidence="7">
    <location>
        <begin position="8"/>
        <end position="14"/>
    </location>
</feature>
<feature type="helix" evidence="7">
    <location>
        <begin position="15"/>
        <end position="21"/>
    </location>
</feature>
<feature type="helix" evidence="7">
    <location>
        <begin position="27"/>
        <end position="32"/>
    </location>
</feature>
<feature type="strand" evidence="8">
    <location>
        <begin position="34"/>
        <end position="36"/>
    </location>
</feature>
<feature type="helix" evidence="7">
    <location>
        <begin position="54"/>
        <end position="56"/>
    </location>
</feature>
<feature type="helix" evidence="7">
    <location>
        <begin position="65"/>
        <end position="86"/>
    </location>
</feature>
<feature type="helix" evidence="7">
    <location>
        <begin position="87"/>
        <end position="89"/>
    </location>
</feature>
<feature type="turn" evidence="7">
    <location>
        <begin position="106"/>
        <end position="109"/>
    </location>
</feature>
<feature type="helix" evidence="7">
    <location>
        <begin position="117"/>
        <end position="132"/>
    </location>
</feature>
<feature type="helix" evidence="7">
    <location>
        <begin position="137"/>
        <end position="150"/>
    </location>
</feature>
<feature type="strand" evidence="7">
    <location>
        <begin position="155"/>
        <end position="158"/>
    </location>
</feature>
<feature type="helix" evidence="7">
    <location>
        <begin position="164"/>
        <end position="176"/>
    </location>
</feature>
<feature type="helix" evidence="7">
    <location>
        <begin position="186"/>
        <end position="188"/>
    </location>
</feature>
<feature type="helix" evidence="7">
    <location>
        <begin position="194"/>
        <end position="196"/>
    </location>
</feature>
<feature type="helix" evidence="7">
    <location>
        <begin position="198"/>
        <end position="203"/>
    </location>
</feature>
<feature type="turn" evidence="7">
    <location>
        <begin position="204"/>
        <end position="206"/>
    </location>
</feature>
<feature type="helix" evidence="7">
    <location>
        <begin position="208"/>
        <end position="220"/>
    </location>
</feature>
<feature type="helix" evidence="7">
    <location>
        <begin position="226"/>
        <end position="243"/>
    </location>
</feature>
<feature type="helix" evidence="7">
    <location>
        <begin position="248"/>
        <end position="251"/>
    </location>
</feature>
<feature type="helix" evidence="7">
    <location>
        <begin position="261"/>
        <end position="267"/>
    </location>
</feature>
<feature type="turn" evidence="7">
    <location>
        <begin position="268"/>
        <end position="273"/>
    </location>
</feature>
<feature type="helix" evidence="7">
    <location>
        <begin position="276"/>
        <end position="278"/>
    </location>
</feature>
<feature type="strand" evidence="7">
    <location>
        <begin position="282"/>
        <end position="284"/>
    </location>
</feature>
<feature type="helix" evidence="7">
    <location>
        <begin position="285"/>
        <end position="297"/>
    </location>
</feature>
<feature type="helix" evidence="7">
    <location>
        <begin position="302"/>
        <end position="310"/>
    </location>
</feature>
<feature type="helix" evidence="7">
    <location>
        <begin position="316"/>
        <end position="331"/>
    </location>
</feature>
<feature type="helix" evidence="7">
    <location>
        <begin position="333"/>
        <end position="335"/>
    </location>
</feature>
<feature type="helix" evidence="7">
    <location>
        <begin position="338"/>
        <end position="343"/>
    </location>
</feature>
<feature type="helix" evidence="7">
    <location>
        <begin position="347"/>
        <end position="360"/>
    </location>
</feature>
<reference key="1">
    <citation type="submission" date="2007-09" db="EMBL/GenBank/DDBJ databases">
        <title>Complete sequence of chromosome of Serratia proteamaculans 568.</title>
        <authorList>
            <consortium name="US DOE Joint Genome Institute"/>
            <person name="Copeland A."/>
            <person name="Lucas S."/>
            <person name="Lapidus A."/>
            <person name="Barry K."/>
            <person name="Glavina del Rio T."/>
            <person name="Dalin E."/>
            <person name="Tice H."/>
            <person name="Pitluck S."/>
            <person name="Chain P."/>
            <person name="Malfatti S."/>
            <person name="Shin M."/>
            <person name="Vergez L."/>
            <person name="Schmutz J."/>
            <person name="Larimer F."/>
            <person name="Land M."/>
            <person name="Hauser L."/>
            <person name="Kyrpides N."/>
            <person name="Kim E."/>
            <person name="Taghavi S."/>
            <person name="Newman L."/>
            <person name="Vangronsveld J."/>
            <person name="van der Lelie D."/>
            <person name="Richardson P."/>
        </authorList>
    </citation>
    <scope>NUCLEOTIDE SEQUENCE [LARGE SCALE GENOMIC DNA]</scope>
    <source>
        <strain>568</strain>
    </source>
</reference>
<reference evidence="5 6" key="2">
    <citation type="journal article" date="2018" name="Cell">
        <title>Bifunctional immunity proteins protect bacteria against FtsZ-targeting ADP-ribosylating toxins.</title>
        <authorList>
            <person name="Ting S.Y."/>
            <person name="Bosch D.E."/>
            <person name="Mangiameli S.M."/>
            <person name="Radey M.C."/>
            <person name="Huang S."/>
            <person name="Park Y.J."/>
            <person name="Kelly K.A."/>
            <person name="Filip S.K."/>
            <person name="Goo Y.A."/>
            <person name="Eng J.K."/>
            <person name="Allaire M."/>
            <person name="Veesler D."/>
            <person name="Wiggins P.A."/>
            <person name="Peterson S.B."/>
            <person name="Mougous J.D."/>
        </authorList>
    </citation>
    <scope>X-RAY CRYSTALLOGRAPHY (1.80 ANGSTROMS) IN COMPLEX WITH TRE1 AND MG(2+)</scope>
    <scope>FUNCTION</scope>
    <scope>COFACTOR</scope>
    <scope>SUBUNIT</scope>
    <scope>DOMAIN</scope>
    <scope>DISRUPTION PHENOTYPE</scope>
    <scope>MUTAGENESIS OF ARG-32 AND ASP-161</scope>
    <source>
        <strain>568</strain>
    </source>
</reference>
<evidence type="ECO:0000269" key="1">
    <source>
    </source>
</evidence>
<evidence type="ECO:0000303" key="2">
    <source>
    </source>
</evidence>
<evidence type="ECO:0000305" key="3"/>
<evidence type="ECO:0000305" key="4">
    <source>
    </source>
</evidence>
<evidence type="ECO:0007744" key="5">
    <source>
        <dbReference type="PDB" id="6DRE"/>
    </source>
</evidence>
<evidence type="ECO:0007744" key="6">
    <source>
        <dbReference type="PDB" id="6DRH"/>
    </source>
</evidence>
<evidence type="ECO:0007829" key="7">
    <source>
        <dbReference type="PDB" id="6DRE"/>
    </source>
</evidence>
<evidence type="ECO:0007829" key="8">
    <source>
        <dbReference type="PDB" id="6DRH"/>
    </source>
</evidence>
<protein>
    <recommendedName>
        <fullName evidence="3">ADP-ribosylarginine hydrolase Tri1</fullName>
        <ecNumber evidence="4">3.2.2.19</ecNumber>
    </recommendedName>
    <alternativeName>
        <fullName evidence="2">Immunity protein Tri1</fullName>
        <shortName evidence="2">Tri1-Sp</shortName>
    </alternativeName>
</protein>
<gene>
    <name evidence="2" type="primary">tri1</name>
    <name type="ordered locus">Spro_3018</name>
</gene>
<organism>
    <name type="scientific">Serratia proteamaculans (strain 568)</name>
    <dbReference type="NCBI Taxonomy" id="399741"/>
    <lineage>
        <taxon>Bacteria</taxon>
        <taxon>Pseudomonadati</taxon>
        <taxon>Pseudomonadota</taxon>
        <taxon>Gammaproteobacteria</taxon>
        <taxon>Enterobacterales</taxon>
        <taxon>Yersiniaceae</taxon>
        <taxon>Serratia</taxon>
    </lineage>
</organism>